<keyword id="KW-0150">Chloroplast</keyword>
<keyword id="KW-0934">Plastid</keyword>
<keyword id="KW-0687">Ribonucleoprotein</keyword>
<keyword id="KW-0689">Ribosomal protein</keyword>
<keyword id="KW-0694">RNA-binding</keyword>
<keyword id="KW-0699">rRNA-binding</keyword>
<protein>
    <recommendedName>
        <fullName evidence="2">Large ribosomal subunit protein uL1c</fullName>
    </recommendedName>
    <alternativeName>
        <fullName>50S ribosomal protein L1, chloroplastic</fullName>
    </alternativeName>
</protein>
<comment type="function">
    <text evidence="2">Binds directly to 23S rRNA. Might be involved in E site tRNA release (Potential).</text>
</comment>
<comment type="subunit">
    <text evidence="1">Part of the 50S ribosomal subunit.</text>
</comment>
<comment type="subcellular location">
    <subcellularLocation>
        <location>Plastid</location>
        <location>Chloroplast</location>
    </subcellularLocation>
</comment>
<comment type="similarity">
    <text evidence="2">Belongs to the universal ribosomal protein uL1 family.</text>
</comment>
<feature type="chain" id="PRO_0000276400" description="Large ribosomal subunit protein uL1c">
    <location>
        <begin position="1"/>
        <end position="230"/>
    </location>
</feature>
<reference key="1">
    <citation type="journal article" date="2007" name="Mol. Genet. Genomics">
        <title>Chloroplast genomes of the diatoms Phaeodactylum tricornutum and Thalassiosira pseudonana: comparison with other plastid genomes of the red lineage.</title>
        <authorList>
            <person name="Oudot-Le Secq M.-P."/>
            <person name="Grimwood J."/>
            <person name="Shapiro H."/>
            <person name="Armbrust E.V."/>
            <person name="Bowler C."/>
            <person name="Green B.R."/>
        </authorList>
    </citation>
    <scope>NUCLEOTIDE SEQUENCE [LARGE SCALE GENOMIC DNA]</scope>
    <source>
        <strain>CCMP1335 / NEPCC58 / CCAP 1085/12</strain>
    </source>
</reference>
<dbReference type="EMBL" id="EF067921">
    <property type="protein sequence ID" value="ABK20741.1"/>
    <property type="molecule type" value="Genomic_DNA"/>
</dbReference>
<dbReference type="RefSeq" id="YP_874518.1">
    <property type="nucleotide sequence ID" value="NC_008589.1"/>
</dbReference>
<dbReference type="SMR" id="A0T0Q6"/>
<dbReference type="FunCoup" id="A0T0Q6">
    <property type="interactions" value="129"/>
</dbReference>
<dbReference type="STRING" id="35128.A0T0Q6"/>
<dbReference type="PaxDb" id="35128-Thapsdraft1911"/>
<dbReference type="GeneID" id="4524748"/>
<dbReference type="eggNOG" id="KOG1569">
    <property type="taxonomic scope" value="Eukaryota"/>
</dbReference>
<dbReference type="InParanoid" id="A0T0Q6"/>
<dbReference type="OMA" id="DNLEFFH"/>
<dbReference type="GO" id="GO:0009507">
    <property type="term" value="C:chloroplast"/>
    <property type="evidence" value="ECO:0007669"/>
    <property type="project" value="UniProtKB-SubCell"/>
</dbReference>
<dbReference type="GO" id="GO:0015934">
    <property type="term" value="C:large ribosomal subunit"/>
    <property type="evidence" value="ECO:0007669"/>
    <property type="project" value="InterPro"/>
</dbReference>
<dbReference type="GO" id="GO:0019843">
    <property type="term" value="F:rRNA binding"/>
    <property type="evidence" value="ECO:0007669"/>
    <property type="project" value="UniProtKB-UniRule"/>
</dbReference>
<dbReference type="GO" id="GO:0003735">
    <property type="term" value="F:structural constituent of ribosome"/>
    <property type="evidence" value="ECO:0007669"/>
    <property type="project" value="InterPro"/>
</dbReference>
<dbReference type="GO" id="GO:0006412">
    <property type="term" value="P:translation"/>
    <property type="evidence" value="ECO:0007669"/>
    <property type="project" value="UniProtKB-UniRule"/>
</dbReference>
<dbReference type="CDD" id="cd00403">
    <property type="entry name" value="Ribosomal_L1"/>
    <property type="match status" value="1"/>
</dbReference>
<dbReference type="FunFam" id="3.40.50.790:FF:000001">
    <property type="entry name" value="50S ribosomal protein L1"/>
    <property type="match status" value="1"/>
</dbReference>
<dbReference type="Gene3D" id="3.30.190.20">
    <property type="match status" value="1"/>
</dbReference>
<dbReference type="Gene3D" id="3.40.50.790">
    <property type="match status" value="1"/>
</dbReference>
<dbReference type="HAMAP" id="MF_01318_B">
    <property type="entry name" value="Ribosomal_uL1_B"/>
    <property type="match status" value="1"/>
</dbReference>
<dbReference type="InterPro" id="IPR005878">
    <property type="entry name" value="Ribosom_uL1_bac-type"/>
</dbReference>
<dbReference type="InterPro" id="IPR002143">
    <property type="entry name" value="Ribosomal_uL1"/>
</dbReference>
<dbReference type="InterPro" id="IPR023674">
    <property type="entry name" value="Ribosomal_uL1-like"/>
</dbReference>
<dbReference type="InterPro" id="IPR028364">
    <property type="entry name" value="Ribosomal_uL1/biogenesis"/>
</dbReference>
<dbReference type="InterPro" id="IPR016095">
    <property type="entry name" value="Ribosomal_uL1_3-a/b-sand"/>
</dbReference>
<dbReference type="InterPro" id="IPR023673">
    <property type="entry name" value="Ribosomal_uL1_CS"/>
</dbReference>
<dbReference type="NCBIfam" id="TIGR01169">
    <property type="entry name" value="rplA_bact"/>
    <property type="match status" value="1"/>
</dbReference>
<dbReference type="PANTHER" id="PTHR36427">
    <property type="entry name" value="54S RIBOSOMAL PROTEIN L1, MITOCHONDRIAL"/>
    <property type="match status" value="1"/>
</dbReference>
<dbReference type="PANTHER" id="PTHR36427:SF3">
    <property type="entry name" value="LARGE RIBOSOMAL SUBUNIT PROTEIN UL1M"/>
    <property type="match status" value="1"/>
</dbReference>
<dbReference type="Pfam" id="PF00687">
    <property type="entry name" value="Ribosomal_L1"/>
    <property type="match status" value="1"/>
</dbReference>
<dbReference type="PIRSF" id="PIRSF002155">
    <property type="entry name" value="Ribosomal_L1"/>
    <property type="match status" value="1"/>
</dbReference>
<dbReference type="SUPFAM" id="SSF56808">
    <property type="entry name" value="Ribosomal protein L1"/>
    <property type="match status" value="1"/>
</dbReference>
<dbReference type="PROSITE" id="PS01199">
    <property type="entry name" value="RIBOSOMAL_L1"/>
    <property type="match status" value="1"/>
</dbReference>
<evidence type="ECO:0000250" key="1"/>
<evidence type="ECO:0000305" key="2"/>
<sequence length="230" mass="25382">MRKLSRRQNENLKKIKNVVHSSLEEAITLLQDTATAKFIESVELHANLNIDTKYADQQLRTTVTLPHGIGKSMRIAVLTNEANFNEANEGGADIVGSQELIDDISQGNLNFDLLVATPDMMPKLAKLGRVLGPKGLMPSPKSGTVSTNLTETLSDFKKGKFEYKADKTGVVHVNFGKANFSKDQLMENLTSLYQSIEQNRPSGVKGKYFKSLFICTSMGPSIQLDLNTFD</sequence>
<organism>
    <name type="scientific">Thalassiosira pseudonana</name>
    <name type="common">Marine diatom</name>
    <name type="synonym">Cyclotella nana</name>
    <dbReference type="NCBI Taxonomy" id="35128"/>
    <lineage>
        <taxon>Eukaryota</taxon>
        <taxon>Sar</taxon>
        <taxon>Stramenopiles</taxon>
        <taxon>Ochrophyta</taxon>
        <taxon>Bacillariophyta</taxon>
        <taxon>Coscinodiscophyceae</taxon>
        <taxon>Thalassiosirophycidae</taxon>
        <taxon>Thalassiosirales</taxon>
        <taxon>Thalassiosiraceae</taxon>
        <taxon>Thalassiosira</taxon>
    </lineage>
</organism>
<gene>
    <name type="primary">rpl1</name>
</gene>
<name>RK1_THAPS</name>
<accession>A0T0Q6</accession>
<proteinExistence type="inferred from homology"/>
<geneLocation type="chloroplast"/>